<keyword id="KW-1185">Reference proteome</keyword>
<keyword id="KW-0687">Ribonucleoprotein</keyword>
<keyword id="KW-0689">Ribosomal protein</keyword>
<keyword id="KW-0694">RNA-binding</keyword>
<keyword id="KW-0699">rRNA-binding</keyword>
<proteinExistence type="inferred from homology"/>
<comment type="function">
    <text evidence="1">One of two assembly initiator proteins, it binds directly to the 5'-end of the 23S rRNA, where it nucleates assembly of the 50S subunit.</text>
</comment>
<comment type="function">
    <text evidence="1">One of the proteins that surrounds the polypeptide exit tunnel on the outside of the subunit.</text>
</comment>
<comment type="subunit">
    <text evidence="1">Part of the 50S ribosomal subunit.</text>
</comment>
<comment type="similarity">
    <text evidence="1">Belongs to the universal ribosomal protein uL24 family.</text>
</comment>
<gene>
    <name evidence="1" type="primary">rplX</name>
    <name type="ordered locus">MS53_0632</name>
</gene>
<protein>
    <recommendedName>
        <fullName evidence="1">Large ribosomal subunit protein uL24</fullName>
    </recommendedName>
    <alternativeName>
        <fullName evidence="2">50S ribosomal protein L24</fullName>
    </alternativeName>
</protein>
<evidence type="ECO:0000255" key="1">
    <source>
        <dbReference type="HAMAP-Rule" id="MF_01326"/>
    </source>
</evidence>
<evidence type="ECO:0000305" key="2"/>
<reference key="1">
    <citation type="journal article" date="2005" name="J. Bacteriol.">
        <title>Swine and poultry pathogens: the complete genome sequences of two strains of Mycoplasma hyopneumoniae and a strain of Mycoplasma synoviae.</title>
        <authorList>
            <person name="Vasconcelos A.T.R."/>
            <person name="Ferreira H.B."/>
            <person name="Bizarro C.V."/>
            <person name="Bonatto S.L."/>
            <person name="Carvalho M.O."/>
            <person name="Pinto P.M."/>
            <person name="Almeida D.F."/>
            <person name="Almeida L.G.P."/>
            <person name="Almeida R."/>
            <person name="Alves-Junior L."/>
            <person name="Assuncao E.N."/>
            <person name="Azevedo V.A.C."/>
            <person name="Bogo M.R."/>
            <person name="Brigido M.M."/>
            <person name="Brocchi M."/>
            <person name="Burity H.A."/>
            <person name="Camargo A.A."/>
            <person name="Camargo S.S."/>
            <person name="Carepo M.S."/>
            <person name="Carraro D.M."/>
            <person name="de Mattos Cascardo J.C."/>
            <person name="Castro L.A."/>
            <person name="Cavalcanti G."/>
            <person name="Chemale G."/>
            <person name="Collevatti R.G."/>
            <person name="Cunha C.W."/>
            <person name="Dallagiovanna B."/>
            <person name="Dambros B.P."/>
            <person name="Dellagostin O.A."/>
            <person name="Falcao C."/>
            <person name="Fantinatti-Garboggini F."/>
            <person name="Felipe M.S.S."/>
            <person name="Fiorentin L."/>
            <person name="Franco G.R."/>
            <person name="Freitas N.S.A."/>
            <person name="Frias D."/>
            <person name="Grangeiro T.B."/>
            <person name="Grisard E.C."/>
            <person name="Guimaraes C.T."/>
            <person name="Hungria M."/>
            <person name="Jardim S.N."/>
            <person name="Krieger M.A."/>
            <person name="Laurino J.P."/>
            <person name="Lima L.F.A."/>
            <person name="Lopes M.I."/>
            <person name="Loreto E.L.S."/>
            <person name="Madeira H.M.F."/>
            <person name="Manfio G.P."/>
            <person name="Maranhao A.Q."/>
            <person name="Martinkovics C.T."/>
            <person name="Medeiros S.R.B."/>
            <person name="Moreira M.A.M."/>
            <person name="Neiva M."/>
            <person name="Ramalho-Neto C.E."/>
            <person name="Nicolas M.F."/>
            <person name="Oliveira S.C."/>
            <person name="Paixao R.F.C."/>
            <person name="Pedrosa F.O."/>
            <person name="Pena S.D.J."/>
            <person name="Pereira M."/>
            <person name="Pereira-Ferrari L."/>
            <person name="Piffer I."/>
            <person name="Pinto L.S."/>
            <person name="Potrich D.P."/>
            <person name="Salim A.C.M."/>
            <person name="Santos F.R."/>
            <person name="Schmitt R."/>
            <person name="Schneider M.P.C."/>
            <person name="Schrank A."/>
            <person name="Schrank I.S."/>
            <person name="Schuck A.F."/>
            <person name="Seuanez H.N."/>
            <person name="Silva D.W."/>
            <person name="Silva R."/>
            <person name="Silva S.C."/>
            <person name="Soares C.M.A."/>
            <person name="Souza K.R.L."/>
            <person name="Souza R.C."/>
            <person name="Staats C.C."/>
            <person name="Steffens M.B.R."/>
            <person name="Teixeira S.M.R."/>
            <person name="Urmenyi T.P."/>
            <person name="Vainstein M.H."/>
            <person name="Zuccherato L.W."/>
            <person name="Simpson A.J.G."/>
            <person name="Zaha A."/>
        </authorList>
    </citation>
    <scope>NUCLEOTIDE SEQUENCE [LARGE SCALE GENOMIC DNA]</scope>
    <source>
        <strain>53</strain>
    </source>
</reference>
<name>RL24_MYCS5</name>
<feature type="chain" id="PRO_0000241625" description="Large ribosomal subunit protein uL24">
    <location>
        <begin position="1"/>
        <end position="108"/>
    </location>
</feature>
<organism>
    <name type="scientific">Mycoplasmopsis synoviae (strain 53)</name>
    <name type="common">Mycoplasma synoviae</name>
    <dbReference type="NCBI Taxonomy" id="262723"/>
    <lineage>
        <taxon>Bacteria</taxon>
        <taxon>Bacillati</taxon>
        <taxon>Mycoplasmatota</taxon>
        <taxon>Mycoplasmoidales</taxon>
        <taxon>Metamycoplasmataceae</taxon>
        <taxon>Mycoplasmopsis</taxon>
    </lineage>
</organism>
<dbReference type="EMBL" id="AE017245">
    <property type="protein sequence ID" value="AAZ44039.1"/>
    <property type="molecule type" value="Genomic_DNA"/>
</dbReference>
<dbReference type="RefSeq" id="WP_011283768.1">
    <property type="nucleotide sequence ID" value="NC_007294.1"/>
</dbReference>
<dbReference type="SMR" id="Q4A5D2"/>
<dbReference type="STRING" id="262723.MS53_0632"/>
<dbReference type="GeneID" id="93530422"/>
<dbReference type="KEGG" id="msy:MS53_0632"/>
<dbReference type="eggNOG" id="COG0198">
    <property type="taxonomic scope" value="Bacteria"/>
</dbReference>
<dbReference type="HOGENOM" id="CLU_093315_2_2_14"/>
<dbReference type="OrthoDB" id="9807419at2"/>
<dbReference type="Proteomes" id="UP000000549">
    <property type="component" value="Chromosome"/>
</dbReference>
<dbReference type="GO" id="GO:1990904">
    <property type="term" value="C:ribonucleoprotein complex"/>
    <property type="evidence" value="ECO:0007669"/>
    <property type="project" value="UniProtKB-KW"/>
</dbReference>
<dbReference type="GO" id="GO:0005840">
    <property type="term" value="C:ribosome"/>
    <property type="evidence" value="ECO:0007669"/>
    <property type="project" value="UniProtKB-KW"/>
</dbReference>
<dbReference type="GO" id="GO:0019843">
    <property type="term" value="F:rRNA binding"/>
    <property type="evidence" value="ECO:0007669"/>
    <property type="project" value="UniProtKB-UniRule"/>
</dbReference>
<dbReference type="GO" id="GO:0003735">
    <property type="term" value="F:structural constituent of ribosome"/>
    <property type="evidence" value="ECO:0007669"/>
    <property type="project" value="InterPro"/>
</dbReference>
<dbReference type="GO" id="GO:0006412">
    <property type="term" value="P:translation"/>
    <property type="evidence" value="ECO:0007669"/>
    <property type="project" value="UniProtKB-UniRule"/>
</dbReference>
<dbReference type="CDD" id="cd06089">
    <property type="entry name" value="KOW_RPL26"/>
    <property type="match status" value="1"/>
</dbReference>
<dbReference type="Gene3D" id="2.30.30.30">
    <property type="match status" value="1"/>
</dbReference>
<dbReference type="HAMAP" id="MF_01326_B">
    <property type="entry name" value="Ribosomal_uL24_B"/>
    <property type="match status" value="1"/>
</dbReference>
<dbReference type="InterPro" id="IPR005824">
    <property type="entry name" value="KOW"/>
</dbReference>
<dbReference type="InterPro" id="IPR014722">
    <property type="entry name" value="Rib_uL2_dom2"/>
</dbReference>
<dbReference type="InterPro" id="IPR003256">
    <property type="entry name" value="Ribosomal_uL24"/>
</dbReference>
<dbReference type="InterPro" id="IPR005825">
    <property type="entry name" value="Ribosomal_uL24_CS"/>
</dbReference>
<dbReference type="InterPro" id="IPR041988">
    <property type="entry name" value="Ribosomal_uL24_KOW"/>
</dbReference>
<dbReference type="InterPro" id="IPR008991">
    <property type="entry name" value="Translation_prot_SH3-like_sf"/>
</dbReference>
<dbReference type="NCBIfam" id="TIGR01079">
    <property type="entry name" value="rplX_bact"/>
    <property type="match status" value="1"/>
</dbReference>
<dbReference type="PANTHER" id="PTHR12903">
    <property type="entry name" value="MITOCHONDRIAL RIBOSOMAL PROTEIN L24"/>
    <property type="match status" value="1"/>
</dbReference>
<dbReference type="Pfam" id="PF00467">
    <property type="entry name" value="KOW"/>
    <property type="match status" value="1"/>
</dbReference>
<dbReference type="Pfam" id="PF17136">
    <property type="entry name" value="ribosomal_L24"/>
    <property type="match status" value="1"/>
</dbReference>
<dbReference type="SMART" id="SM00739">
    <property type="entry name" value="KOW"/>
    <property type="match status" value="1"/>
</dbReference>
<dbReference type="SUPFAM" id="SSF50104">
    <property type="entry name" value="Translation proteins SH3-like domain"/>
    <property type="match status" value="1"/>
</dbReference>
<dbReference type="PROSITE" id="PS01108">
    <property type="entry name" value="RIBOSOMAL_L24"/>
    <property type="match status" value="1"/>
</dbReference>
<sequence>MKFKKNDEVIVIAGKDKGTVGRIEKILVKENKVIIKDVNMVTKHNKPSQQNQEGNLTSVEAPIHVSNVAYLVKKASKSSAAVYSKLGRVTNKDGKKVRLVKKTKKEIQ</sequence>
<accession>Q4A5D2</accession>